<evidence type="ECO:0000255" key="1">
    <source>
        <dbReference type="HAMAP-Rule" id="MF_01615"/>
    </source>
</evidence>
<feature type="chain" id="PRO_0000255838" description="Pyridoxal 5'-phosphate synthase subunit PdxT">
    <location>
        <begin position="1"/>
        <end position="186"/>
    </location>
</feature>
<feature type="active site" description="Nucleophile" evidence="1">
    <location>
        <position position="75"/>
    </location>
</feature>
<feature type="active site" description="Charge relay system" evidence="1">
    <location>
        <position position="165"/>
    </location>
</feature>
<feature type="active site" description="Charge relay system" evidence="1">
    <location>
        <position position="167"/>
    </location>
</feature>
<feature type="binding site" evidence="1">
    <location>
        <begin position="46"/>
        <end position="48"/>
    </location>
    <ligand>
        <name>L-glutamine</name>
        <dbReference type="ChEBI" id="CHEBI:58359"/>
    </ligand>
</feature>
<feature type="binding site" evidence="1">
    <location>
        <position position="101"/>
    </location>
    <ligand>
        <name>L-glutamine</name>
        <dbReference type="ChEBI" id="CHEBI:58359"/>
    </ligand>
</feature>
<feature type="binding site" evidence="1">
    <location>
        <begin position="129"/>
        <end position="130"/>
    </location>
    <ligand>
        <name>L-glutamine</name>
        <dbReference type="ChEBI" id="CHEBI:58359"/>
    </ligand>
</feature>
<name>PDXT_STAA8</name>
<gene>
    <name evidence="1" type="primary">pdxT</name>
    <name type="ordered locus">SAOUHSC_00500</name>
</gene>
<dbReference type="EC" id="4.3.3.6" evidence="1"/>
<dbReference type="EC" id="3.5.1.2" evidence="1"/>
<dbReference type="EMBL" id="CP000253">
    <property type="protein sequence ID" value="ABD29649.1"/>
    <property type="molecule type" value="Genomic_DNA"/>
</dbReference>
<dbReference type="RefSeq" id="WP_000690439.1">
    <property type="nucleotide sequence ID" value="NZ_LS483365.1"/>
</dbReference>
<dbReference type="RefSeq" id="YP_499073.1">
    <property type="nucleotide sequence ID" value="NC_007795.1"/>
</dbReference>
<dbReference type="SMR" id="Q2G0Q0"/>
<dbReference type="STRING" id="93061.SAOUHSC_00500"/>
<dbReference type="MEROPS" id="C26.A32"/>
<dbReference type="PaxDb" id="1280-SAXN108_0573"/>
<dbReference type="GeneID" id="3920412"/>
<dbReference type="KEGG" id="sao:SAOUHSC_00500"/>
<dbReference type="PATRIC" id="fig|93061.5.peg.447"/>
<dbReference type="eggNOG" id="COG0311">
    <property type="taxonomic scope" value="Bacteria"/>
</dbReference>
<dbReference type="HOGENOM" id="CLU_069674_2_0_9"/>
<dbReference type="OrthoDB" id="9810320at2"/>
<dbReference type="UniPathway" id="UPA00245"/>
<dbReference type="PRO" id="PR:Q2G0Q0"/>
<dbReference type="Proteomes" id="UP000008816">
    <property type="component" value="Chromosome"/>
</dbReference>
<dbReference type="GO" id="GO:0005829">
    <property type="term" value="C:cytosol"/>
    <property type="evidence" value="ECO:0000318"/>
    <property type="project" value="GO_Central"/>
</dbReference>
<dbReference type="GO" id="GO:1903600">
    <property type="term" value="C:glutaminase complex"/>
    <property type="evidence" value="ECO:0000318"/>
    <property type="project" value="GO_Central"/>
</dbReference>
<dbReference type="GO" id="GO:0004359">
    <property type="term" value="F:glutaminase activity"/>
    <property type="evidence" value="ECO:0007669"/>
    <property type="project" value="UniProtKB-UniRule"/>
</dbReference>
<dbReference type="GO" id="GO:0036381">
    <property type="term" value="F:pyridoxal 5'-phosphate synthase (glutamine hydrolysing) activity"/>
    <property type="evidence" value="ECO:0007669"/>
    <property type="project" value="UniProtKB-UniRule"/>
</dbReference>
<dbReference type="GO" id="GO:0006543">
    <property type="term" value="P:glutamine catabolic process"/>
    <property type="evidence" value="ECO:0007669"/>
    <property type="project" value="UniProtKB-UniRule"/>
</dbReference>
<dbReference type="GO" id="GO:0042823">
    <property type="term" value="P:pyridoxal phosphate biosynthetic process"/>
    <property type="evidence" value="ECO:0000318"/>
    <property type="project" value="GO_Central"/>
</dbReference>
<dbReference type="GO" id="GO:0008614">
    <property type="term" value="P:pyridoxine metabolic process"/>
    <property type="evidence" value="ECO:0000318"/>
    <property type="project" value="GO_Central"/>
</dbReference>
<dbReference type="CDD" id="cd01749">
    <property type="entry name" value="GATase1_PB"/>
    <property type="match status" value="1"/>
</dbReference>
<dbReference type="FunFam" id="3.40.50.880:FF:000010">
    <property type="entry name" value="uncharacterized protein LOC100176842 isoform X2"/>
    <property type="match status" value="1"/>
</dbReference>
<dbReference type="Gene3D" id="3.40.50.880">
    <property type="match status" value="1"/>
</dbReference>
<dbReference type="HAMAP" id="MF_01615">
    <property type="entry name" value="PdxT"/>
    <property type="match status" value="1"/>
</dbReference>
<dbReference type="InterPro" id="IPR029062">
    <property type="entry name" value="Class_I_gatase-like"/>
</dbReference>
<dbReference type="InterPro" id="IPR002161">
    <property type="entry name" value="PdxT/SNO"/>
</dbReference>
<dbReference type="InterPro" id="IPR021196">
    <property type="entry name" value="PdxT/SNO_CS"/>
</dbReference>
<dbReference type="NCBIfam" id="TIGR03800">
    <property type="entry name" value="PLP_synth_Pdx2"/>
    <property type="match status" value="1"/>
</dbReference>
<dbReference type="PANTHER" id="PTHR31559">
    <property type="entry name" value="PYRIDOXAL 5'-PHOSPHATE SYNTHASE SUBUNIT SNO"/>
    <property type="match status" value="1"/>
</dbReference>
<dbReference type="PANTHER" id="PTHR31559:SF0">
    <property type="entry name" value="PYRIDOXAL 5'-PHOSPHATE SYNTHASE SUBUNIT SNO1-RELATED"/>
    <property type="match status" value="1"/>
</dbReference>
<dbReference type="Pfam" id="PF01174">
    <property type="entry name" value="SNO"/>
    <property type="match status" value="1"/>
</dbReference>
<dbReference type="PIRSF" id="PIRSF005639">
    <property type="entry name" value="Glut_amidoT_SNO"/>
    <property type="match status" value="1"/>
</dbReference>
<dbReference type="SUPFAM" id="SSF52317">
    <property type="entry name" value="Class I glutamine amidotransferase-like"/>
    <property type="match status" value="1"/>
</dbReference>
<dbReference type="PROSITE" id="PS01236">
    <property type="entry name" value="PDXT_SNO_1"/>
    <property type="match status" value="1"/>
</dbReference>
<dbReference type="PROSITE" id="PS51130">
    <property type="entry name" value="PDXT_SNO_2"/>
    <property type="match status" value="1"/>
</dbReference>
<reference key="1">
    <citation type="book" date="2006" name="Gram positive pathogens, 2nd edition">
        <title>The Staphylococcus aureus NCTC 8325 genome.</title>
        <editorList>
            <person name="Fischetti V."/>
            <person name="Novick R."/>
            <person name="Ferretti J."/>
            <person name="Portnoy D."/>
            <person name="Rood J."/>
        </editorList>
        <authorList>
            <person name="Gillaspy A.F."/>
            <person name="Worrell V."/>
            <person name="Orvis J."/>
            <person name="Roe B.A."/>
            <person name="Dyer D.W."/>
            <person name="Iandolo J.J."/>
        </authorList>
    </citation>
    <scope>NUCLEOTIDE SEQUENCE [LARGE SCALE GENOMIC DNA]</scope>
    <source>
        <strain>NCTC 8325 / PS 47</strain>
    </source>
</reference>
<protein>
    <recommendedName>
        <fullName evidence="1">Pyridoxal 5'-phosphate synthase subunit PdxT</fullName>
        <ecNumber evidence="1">4.3.3.6</ecNumber>
    </recommendedName>
    <alternativeName>
        <fullName evidence="1">Pdx2</fullName>
    </alternativeName>
    <alternativeName>
        <fullName evidence="1">Pyridoxal 5'-phosphate synthase glutaminase subunit</fullName>
        <ecNumber evidence="1">3.5.1.2</ecNumber>
    </alternativeName>
</protein>
<organism>
    <name type="scientific">Staphylococcus aureus (strain NCTC 8325 / PS 47)</name>
    <dbReference type="NCBI Taxonomy" id="93061"/>
    <lineage>
        <taxon>Bacteria</taxon>
        <taxon>Bacillati</taxon>
        <taxon>Bacillota</taxon>
        <taxon>Bacilli</taxon>
        <taxon>Bacillales</taxon>
        <taxon>Staphylococcaceae</taxon>
        <taxon>Staphylococcus</taxon>
    </lineage>
</organism>
<comment type="function">
    <text evidence="1">Catalyzes the hydrolysis of glutamine to glutamate and ammonia as part of the biosynthesis of pyridoxal 5'-phosphate. The resulting ammonia molecule is channeled to the active site of PdxS.</text>
</comment>
<comment type="catalytic activity">
    <reaction evidence="1">
        <text>aldehydo-D-ribose 5-phosphate + D-glyceraldehyde 3-phosphate + L-glutamine = pyridoxal 5'-phosphate + L-glutamate + phosphate + 3 H2O + H(+)</text>
        <dbReference type="Rhea" id="RHEA:31507"/>
        <dbReference type="ChEBI" id="CHEBI:15377"/>
        <dbReference type="ChEBI" id="CHEBI:15378"/>
        <dbReference type="ChEBI" id="CHEBI:29985"/>
        <dbReference type="ChEBI" id="CHEBI:43474"/>
        <dbReference type="ChEBI" id="CHEBI:58273"/>
        <dbReference type="ChEBI" id="CHEBI:58359"/>
        <dbReference type="ChEBI" id="CHEBI:59776"/>
        <dbReference type="ChEBI" id="CHEBI:597326"/>
        <dbReference type="EC" id="4.3.3.6"/>
    </reaction>
</comment>
<comment type="catalytic activity">
    <reaction evidence="1">
        <text>L-glutamine + H2O = L-glutamate + NH4(+)</text>
        <dbReference type="Rhea" id="RHEA:15889"/>
        <dbReference type="ChEBI" id="CHEBI:15377"/>
        <dbReference type="ChEBI" id="CHEBI:28938"/>
        <dbReference type="ChEBI" id="CHEBI:29985"/>
        <dbReference type="ChEBI" id="CHEBI:58359"/>
        <dbReference type="EC" id="3.5.1.2"/>
    </reaction>
</comment>
<comment type="pathway">
    <text evidence="1">Cofactor biosynthesis; pyridoxal 5'-phosphate biosynthesis.</text>
</comment>
<comment type="subunit">
    <text evidence="1">In the presence of PdxS, forms a dodecamer of heterodimers. Only shows activity in the heterodimer.</text>
</comment>
<comment type="similarity">
    <text evidence="1">Belongs to the glutaminase PdxT/SNO family.</text>
</comment>
<keyword id="KW-0315">Glutamine amidotransferase</keyword>
<keyword id="KW-0378">Hydrolase</keyword>
<keyword id="KW-0456">Lyase</keyword>
<keyword id="KW-0663">Pyridoxal phosphate</keyword>
<keyword id="KW-1185">Reference proteome</keyword>
<sequence>MKIGVLALQGAVREHIRHIELSGHEGIAVKKVEQLEEIEGLILPGGESTTLRRLMNLYGFKEALQNSTLPMFGTCAGLIVLAQDIVGEEGYLNKLNITVQRNSFGRQVDSFETELDIKGIATDIEGVFIRAPHIEKVGQGVDILCKVNEKIVAVQQGKYLGVSFHPELTDDYRVTDYFINHIVKKA</sequence>
<accession>Q2G0Q0</accession>
<proteinExistence type="inferred from homology"/>